<dbReference type="EMBL" id="X02624">
    <property type="protein sequence ID" value="CAB37646.1"/>
    <property type="molecule type" value="Genomic_DNA"/>
</dbReference>
<dbReference type="PIR" id="A02584">
    <property type="entry name" value="HSTR1R"/>
</dbReference>
<dbReference type="RefSeq" id="XP_036804272.1">
    <property type="nucleotide sequence ID" value="XM_036948377.1"/>
</dbReference>
<dbReference type="RefSeq" id="XP_036804274.1">
    <property type="nucleotide sequence ID" value="XM_036948379.1"/>
</dbReference>
<dbReference type="RefSeq" id="XP_036804283.1">
    <property type="nucleotide sequence ID" value="XM_036948388.1"/>
</dbReference>
<dbReference type="RefSeq" id="XP_036804292.1">
    <property type="nucleotide sequence ID" value="XM_036948397.1"/>
</dbReference>
<dbReference type="RefSeq" id="XP_036804294.1">
    <property type="nucleotide sequence ID" value="XM_036948399.1"/>
</dbReference>
<dbReference type="RefSeq" id="XP_036804296.1">
    <property type="nucleotide sequence ID" value="XM_036948401.1"/>
</dbReference>
<dbReference type="RefSeq" id="XP_036804298.1">
    <property type="nucleotide sequence ID" value="XM_036948403.1"/>
</dbReference>
<dbReference type="RefSeq" id="XP_036804300.1">
    <property type="nucleotide sequence ID" value="XM_036948405.1"/>
</dbReference>
<dbReference type="RefSeq" id="XP_036805722.1">
    <property type="nucleotide sequence ID" value="XM_036949827.1"/>
</dbReference>
<dbReference type="RefSeq" id="XP_036830036.1">
    <property type="nucleotide sequence ID" value="XM_036974141.1"/>
</dbReference>
<dbReference type="RefSeq" id="XP_036830037.1">
    <property type="nucleotide sequence ID" value="XM_036974142.1"/>
</dbReference>
<dbReference type="RefSeq" id="XP_036830042.1">
    <property type="nucleotide sequence ID" value="XM_036974147.1"/>
</dbReference>
<dbReference type="RefSeq" id="XP_036830043.1">
    <property type="nucleotide sequence ID" value="XM_036974148.1"/>
</dbReference>
<dbReference type="RefSeq" id="XP_036830044.1">
    <property type="nucleotide sequence ID" value="XM_036974149.1"/>
</dbReference>
<dbReference type="RefSeq" id="XP_036830051.1">
    <property type="nucleotide sequence ID" value="XM_036974156.1"/>
</dbReference>
<dbReference type="RefSeq" id="XP_036830059.1">
    <property type="nucleotide sequence ID" value="XM_036974164.1"/>
</dbReference>
<dbReference type="RefSeq" id="XP_036830060.1">
    <property type="nucleotide sequence ID" value="XM_036974165.1"/>
</dbReference>
<dbReference type="RefSeq" id="XP_036830061.1">
    <property type="nucleotide sequence ID" value="XM_036974166.1"/>
</dbReference>
<dbReference type="RefSeq" id="XP_036830067.1">
    <property type="nucleotide sequence ID" value="XM_036974172.1"/>
</dbReference>
<dbReference type="RefSeq" id="XP_036830068.1">
    <property type="nucleotide sequence ID" value="XM_036974173.1"/>
</dbReference>
<dbReference type="RefSeq" id="XP_036830069.1">
    <property type="nucleotide sequence ID" value="XM_036974174.1"/>
</dbReference>
<dbReference type="RefSeq" id="XP_036830070.1">
    <property type="nucleotide sequence ID" value="XM_036974175.1"/>
</dbReference>
<dbReference type="RefSeq" id="XP_036830082.1">
    <property type="nucleotide sequence ID" value="XM_036974187.1"/>
</dbReference>
<dbReference type="RefSeq" id="XP_036830091.1">
    <property type="nucleotide sequence ID" value="XM_036974196.1"/>
</dbReference>
<dbReference type="RefSeq" id="XP_036830092.1">
    <property type="nucleotide sequence ID" value="XM_036974197.1"/>
</dbReference>
<dbReference type="RefSeq" id="XP_036830098.1">
    <property type="nucleotide sequence ID" value="XM_036974203.1"/>
</dbReference>
<dbReference type="RefSeq" id="XP_036830138.1">
    <property type="nucleotide sequence ID" value="XM_036974243.1"/>
</dbReference>
<dbReference type="RefSeq" id="XP_036830139.1">
    <property type="nucleotide sequence ID" value="XM_036974244.1"/>
</dbReference>
<dbReference type="RefSeq" id="XP_036830146.1">
    <property type="nucleotide sequence ID" value="XM_036974251.1"/>
</dbReference>
<dbReference type="RefSeq" id="XP_036830147.1">
    <property type="nucleotide sequence ID" value="XM_036974252.1"/>
</dbReference>
<dbReference type="RefSeq" id="XP_036830154.1">
    <property type="nucleotide sequence ID" value="XM_036974259.1"/>
</dbReference>
<dbReference type="RefSeq" id="XP_036830155.1">
    <property type="nucleotide sequence ID" value="XM_036974260.1"/>
</dbReference>
<dbReference type="RefSeq" id="XP_036830162.1">
    <property type="nucleotide sequence ID" value="XM_036974267.1"/>
</dbReference>
<dbReference type="SMR" id="P06350"/>
<dbReference type="Ensembl" id="ENSOMYT00000153437.1">
    <property type="protein sequence ID" value="ENSOMYP00000113727.1"/>
    <property type="gene ID" value="ENSOMYG00000062148.1"/>
</dbReference>
<dbReference type="Ensembl" id="ENSOMYT00000158950.1">
    <property type="protein sequence ID" value="ENSOMYP00000133133.1"/>
    <property type="gene ID" value="ENSOMYG00000071152.1"/>
</dbReference>
<dbReference type="GeneID" id="110493829"/>
<dbReference type="GeneID" id="118940120"/>
<dbReference type="GeneID" id="118940122"/>
<dbReference type="GeneID" id="118940130"/>
<dbReference type="GeneID" id="118940134"/>
<dbReference type="GeneID" id="118940136"/>
<dbReference type="GeneID" id="118940138"/>
<dbReference type="GeneID" id="118940140"/>
<dbReference type="GeneID" id="118940142"/>
<dbReference type="GeneID" id="118940408"/>
<dbReference type="GeneID" id="118956070"/>
<dbReference type="GeneID" id="118956071"/>
<dbReference type="GeneID" id="118956076"/>
<dbReference type="GeneID" id="118956077"/>
<dbReference type="GeneID" id="118956078"/>
<dbReference type="GeneID" id="118956085"/>
<dbReference type="GeneID" id="118956093"/>
<dbReference type="GeneID" id="118956094"/>
<dbReference type="GeneID" id="118956095"/>
<dbReference type="GeneID" id="118956100"/>
<dbReference type="GeneID" id="118956101"/>
<dbReference type="GeneID" id="118956102"/>
<dbReference type="GeneID" id="118956103"/>
<dbReference type="GeneID" id="118956114"/>
<dbReference type="GeneID" id="118956124"/>
<dbReference type="GeneID" id="118956125"/>
<dbReference type="GeneID" id="118956131"/>
<dbReference type="GeneID" id="118956950"/>
<dbReference type="GeneID" id="118956958"/>
<dbReference type="GeneID" id="118956959"/>
<dbReference type="GeneID" id="118956965"/>
<dbReference type="GeneID" id="118956966"/>
<dbReference type="GeneID" id="118956973"/>
<dbReference type="GeneTree" id="ENSGT00950000183089"/>
<dbReference type="OrthoDB" id="8964560at2759"/>
<dbReference type="Proteomes" id="UP000694395">
    <property type="component" value="Chromosome 17"/>
</dbReference>
<dbReference type="Proteomes" id="UP000694395">
    <property type="component" value="Unassembled WGS sequence"/>
</dbReference>
<dbReference type="GO" id="GO:0005576">
    <property type="term" value="C:extracellular region"/>
    <property type="evidence" value="ECO:0007669"/>
    <property type="project" value="UniProtKB-SubCell"/>
</dbReference>
<dbReference type="GO" id="GO:0000786">
    <property type="term" value="C:nucleosome"/>
    <property type="evidence" value="ECO:0007669"/>
    <property type="project" value="InterPro"/>
</dbReference>
<dbReference type="GO" id="GO:0005634">
    <property type="term" value="C:nucleus"/>
    <property type="evidence" value="ECO:0000314"/>
    <property type="project" value="AgBase"/>
</dbReference>
<dbReference type="GO" id="GO:0003677">
    <property type="term" value="F:DNA binding"/>
    <property type="evidence" value="ECO:0007669"/>
    <property type="project" value="UniProtKB-KW"/>
</dbReference>
<dbReference type="GO" id="GO:0030527">
    <property type="term" value="F:structural constituent of chromatin"/>
    <property type="evidence" value="ECO:0007669"/>
    <property type="project" value="InterPro"/>
</dbReference>
<dbReference type="GO" id="GO:0042742">
    <property type="term" value="P:defense response to bacterium"/>
    <property type="evidence" value="ECO:0007669"/>
    <property type="project" value="UniProtKB-KW"/>
</dbReference>
<dbReference type="GO" id="GO:0006334">
    <property type="term" value="P:nucleosome assembly"/>
    <property type="evidence" value="ECO:0007669"/>
    <property type="project" value="InterPro"/>
</dbReference>
<dbReference type="CDD" id="cd00073">
    <property type="entry name" value="H15"/>
    <property type="match status" value="1"/>
</dbReference>
<dbReference type="FunFam" id="1.10.10.10:FF:000075">
    <property type="entry name" value="Histone H1 like"/>
    <property type="match status" value="1"/>
</dbReference>
<dbReference type="Gene3D" id="1.10.10.10">
    <property type="entry name" value="Winged helix-like DNA-binding domain superfamily/Winged helix DNA-binding domain"/>
    <property type="match status" value="1"/>
</dbReference>
<dbReference type="InterPro" id="IPR005819">
    <property type="entry name" value="H1/H5"/>
</dbReference>
<dbReference type="InterPro" id="IPR005818">
    <property type="entry name" value="Histone_H1/H5_H15"/>
</dbReference>
<dbReference type="InterPro" id="IPR036388">
    <property type="entry name" value="WH-like_DNA-bd_sf"/>
</dbReference>
<dbReference type="InterPro" id="IPR036390">
    <property type="entry name" value="WH_DNA-bd_sf"/>
</dbReference>
<dbReference type="Pfam" id="PF00538">
    <property type="entry name" value="Linker_histone"/>
    <property type="match status" value="1"/>
</dbReference>
<dbReference type="PRINTS" id="PR00624">
    <property type="entry name" value="HISTONEH5"/>
</dbReference>
<dbReference type="SMART" id="SM00526">
    <property type="entry name" value="H15"/>
    <property type="match status" value="1"/>
</dbReference>
<dbReference type="SUPFAM" id="SSF46785">
    <property type="entry name" value="Winged helix' DNA-binding domain"/>
    <property type="match status" value="1"/>
</dbReference>
<dbReference type="PROSITE" id="PS51504">
    <property type="entry name" value="H15"/>
    <property type="match status" value="1"/>
</dbReference>
<keyword id="KW-0007">Acetylation</keyword>
<keyword id="KW-0044">Antibiotic</keyword>
<keyword id="KW-0929">Antimicrobial</keyword>
<keyword id="KW-0158">Chromosome</keyword>
<keyword id="KW-0903">Direct protein sequencing</keyword>
<keyword id="KW-0238">DNA-binding</keyword>
<keyword id="KW-0539">Nucleus</keyword>
<keyword id="KW-0964">Secreted</keyword>
<comment type="function">
    <text evidence="4">Histones H1 are necessary for the condensation of nucleosome chains into higher-order structures.</text>
</comment>
<comment type="function">
    <text evidence="4">Oncorhyncin II has antibacterial activity against Gram-positive and Gram-negative bacteria at submicromolar concentrations. Potentially important role in mucosal defense.</text>
</comment>
<comment type="biophysicochemical properties">
    <temperatureDependence>
        <text>Thermostable up to 80 degrees Celsius.</text>
    </temperatureDependence>
</comment>
<comment type="subcellular location">
    <subcellularLocation>
        <location>Nucleus</location>
    </subcellularLocation>
    <subcellularLocation>
        <location>Chromosome</location>
    </subcellularLocation>
</comment>
<comment type="subcellular location">
    <molecule>Oncorhyncin II</molecule>
    <subcellularLocation>
        <location>Secreted</location>
    </subcellularLocation>
</comment>
<comment type="tissue specificity">
    <text>Oncorhyncin II is expressed in skin.</text>
</comment>
<comment type="mass spectrometry" mass="7195.3" method="MALDI" evidence="4">
    <molecule>Oncorhyncin II</molecule>
</comment>
<comment type="similarity">
    <text evidence="2">Belongs to the histone H1/H5 family.</text>
</comment>
<reference key="1">
    <citation type="journal article" date="1984" name="J. Mol. Evol.">
        <title>An H1 histone gene from rainbow trout (Salmo gairdnerii).</title>
        <authorList>
            <person name="Mezquita J."/>
            <person name="Connor W."/>
            <person name="Winkfein R.J."/>
            <person name="Dixon G.H."/>
        </authorList>
    </citation>
    <scope>NUCLEOTIDE SEQUENCE [GENOMIC DNA]</scope>
</reference>
<reference key="2">
    <citation type="journal article" date="2004" name="Dev. Comp. Immunol.">
        <title>Isolation and characterisation of oncorhyncin II, a histone H1-derived antimicrobial peptide from skin secretions of rainbow trout, Oncorhynchus mykiss.</title>
        <authorList>
            <person name="Fernandes J.M.O."/>
            <person name="Molle G."/>
            <person name="Kemp G.D."/>
            <person name="Smith V.J."/>
        </authorList>
    </citation>
    <scope>PROTEIN SEQUENCE OF 139-155</scope>
    <scope>FUNCTION OF ONCORHYNCIN II</scope>
    <scope>MASS SPECTROMETRY OF 139-207</scope>
    <source>
        <tissue>Skin mucus</tissue>
    </source>
</reference>
<sequence length="207" mass="20803">MAEVAPAPAAAAPAKAPKKKAAAKPKKAGPSVGELIVKAVSASKERSGVSLAALKKSLAAGGYDVEKNNSRVKIAVKSLVTKGTLVQTKGTGASGSFKLNKKAVEAKKPAKKAAAPKAKKVAAKKPAAAKKPKKVAAKKAVAAKKSPKKAKKPATPKKAAKSPKKVKKPAAAAKKAAKSPKKATKAAKPKAAKPKAAKAKKAAPKKK</sequence>
<protein>
    <recommendedName>
        <fullName>Histone H1</fullName>
    </recommendedName>
    <component>
        <recommendedName>
            <fullName>Oncorhyncin II</fullName>
        </recommendedName>
    </component>
</protein>
<organism>
    <name type="scientific">Oncorhynchus mykiss</name>
    <name type="common">Rainbow trout</name>
    <name type="synonym">Salmo gairdneri</name>
    <dbReference type="NCBI Taxonomy" id="8022"/>
    <lineage>
        <taxon>Eukaryota</taxon>
        <taxon>Metazoa</taxon>
        <taxon>Chordata</taxon>
        <taxon>Craniata</taxon>
        <taxon>Vertebrata</taxon>
        <taxon>Euteleostomi</taxon>
        <taxon>Actinopterygii</taxon>
        <taxon>Neopterygii</taxon>
        <taxon>Teleostei</taxon>
        <taxon>Protacanthopterygii</taxon>
        <taxon>Salmoniformes</taxon>
        <taxon>Salmonidae</taxon>
        <taxon>Salmoninae</taxon>
        <taxon>Oncorhynchus</taxon>
    </lineage>
</organism>
<accession>P06350</accession>
<accession>P83374</accession>
<evidence type="ECO:0000250" key="1"/>
<evidence type="ECO:0000255" key="2">
    <source>
        <dbReference type="PROSITE-ProRule" id="PRU00837"/>
    </source>
</evidence>
<evidence type="ECO:0000256" key="3">
    <source>
        <dbReference type="SAM" id="MobiDB-lite"/>
    </source>
</evidence>
<evidence type="ECO:0000269" key="4">
    <source>
    </source>
</evidence>
<evidence type="ECO:0000305" key="5"/>
<proteinExistence type="evidence at protein level"/>
<feature type="initiator methionine" description="Removed">
    <location>
        <position position="1"/>
    </location>
</feature>
<feature type="chain" id="PRO_0000013156" description="Histone H1">
    <location>
        <begin position="2"/>
        <end position="207"/>
    </location>
</feature>
<feature type="chain" id="PRO_0000013157" description="Oncorhyncin II">
    <location>
        <begin position="139"/>
        <end position="207"/>
    </location>
</feature>
<feature type="domain" description="H15" evidence="2">
    <location>
        <begin position="28"/>
        <end position="101"/>
    </location>
</feature>
<feature type="region of interest" description="Disordered" evidence="3">
    <location>
        <begin position="1"/>
        <end position="28"/>
    </location>
</feature>
<feature type="region of interest" description="Disordered" evidence="3">
    <location>
        <begin position="105"/>
        <end position="207"/>
    </location>
</feature>
<feature type="compositionally biased region" description="Low complexity" evidence="3">
    <location>
        <begin position="1"/>
        <end position="15"/>
    </location>
</feature>
<feature type="compositionally biased region" description="Basic residues" evidence="3">
    <location>
        <begin position="16"/>
        <end position="27"/>
    </location>
</feature>
<feature type="compositionally biased region" description="Basic residues" evidence="3">
    <location>
        <begin position="117"/>
        <end position="168"/>
    </location>
</feature>
<feature type="compositionally biased region" description="Basic residues" evidence="3">
    <location>
        <begin position="175"/>
        <end position="207"/>
    </location>
</feature>
<feature type="site" description="Cleavage" evidence="5">
    <location>
        <begin position="138"/>
        <end position="139"/>
    </location>
</feature>
<feature type="modified residue" description="N-acetylalanine" evidence="1">
    <location>
        <position position="2"/>
    </location>
</feature>
<name>H1_ONCMY</name>